<feature type="chain" id="PRO_0000183591" description="Cytochrome c oxidase subunit 2">
    <location>
        <begin position="1"/>
        <end position="247"/>
    </location>
</feature>
<feature type="topological domain" description="Mitochondrial intermembrane" evidence="2">
    <location>
        <begin position="1"/>
        <end position="38"/>
    </location>
</feature>
<feature type="transmembrane region" description="Helical" evidence="2">
    <location>
        <begin position="39"/>
        <end position="55"/>
    </location>
</feature>
<feature type="topological domain" description="Mitochondrial matrix" evidence="2">
    <location>
        <begin position="56"/>
        <end position="86"/>
    </location>
</feature>
<feature type="transmembrane region" description="Helical" evidence="2">
    <location>
        <begin position="87"/>
        <end position="103"/>
    </location>
</feature>
<feature type="topological domain" description="Mitochondrial intermembrane" evidence="2">
    <location>
        <begin position="104"/>
        <end position="247"/>
    </location>
</feature>
<feature type="binding site" evidence="1">
    <location>
        <position position="182"/>
    </location>
    <ligand>
        <name>Cu cation</name>
        <dbReference type="ChEBI" id="CHEBI:23378"/>
        <label>A1</label>
    </ligand>
</feature>
<feature type="binding site" evidence="1">
    <location>
        <position position="217"/>
    </location>
    <ligand>
        <name>Cu cation</name>
        <dbReference type="ChEBI" id="CHEBI:23378"/>
        <label>A1</label>
    </ligand>
</feature>
<feature type="binding site" evidence="1">
    <location>
        <position position="217"/>
    </location>
    <ligand>
        <name>Cu cation</name>
        <dbReference type="ChEBI" id="CHEBI:23378"/>
        <label>A2</label>
    </ligand>
</feature>
<feature type="binding site" evidence="1">
    <location>
        <position position="219"/>
    </location>
    <ligand>
        <name>Cu cation</name>
        <dbReference type="ChEBI" id="CHEBI:23378"/>
        <label>A2</label>
    </ligand>
</feature>
<feature type="binding site" evidence="1">
    <location>
        <position position="219"/>
    </location>
    <ligand>
        <name>Mg(2+)</name>
        <dbReference type="ChEBI" id="CHEBI:18420"/>
        <note>ligand shared with subunit 1</note>
    </ligand>
</feature>
<feature type="binding site" evidence="1">
    <location>
        <position position="221"/>
    </location>
    <ligand>
        <name>Cu cation</name>
        <dbReference type="ChEBI" id="CHEBI:23378"/>
        <label>A1</label>
    </ligand>
</feature>
<feature type="binding site" evidence="1">
    <location>
        <position position="221"/>
    </location>
    <ligand>
        <name>Cu cation</name>
        <dbReference type="ChEBI" id="CHEBI:23378"/>
        <label>A2</label>
    </ligand>
</feature>
<feature type="binding site" evidence="1">
    <location>
        <position position="225"/>
    </location>
    <ligand>
        <name>Cu cation</name>
        <dbReference type="ChEBI" id="CHEBI:23378"/>
        <label>A2</label>
    </ligand>
</feature>
<feature type="binding site" evidence="1">
    <location>
        <position position="228"/>
    </location>
    <ligand>
        <name>Cu cation</name>
        <dbReference type="ChEBI" id="CHEBI:23378"/>
        <label>A1</label>
    </ligand>
</feature>
<sequence>MREMMMNNMLNDVPTPWAMYFQDSATPNMEGMMELHNNVLFYLCVMLGFVTYMLYNVMTVYNKSAMAYKYMNHGQFMEMMWTTFPAMMLLMMAFPSFMLLYMCDEVMAPAMTIKAMGLQWYWKYEYSDFMVEKGETMEFESYMIPEDLLEDGQLRMLDVDASVVCPVDTHMRFMVTSADVIHDFCMPSLGIKIDAAPGRLNQTSALMQREGVYYGQCSELCGVMHSSMPIKIEAVPTVDFLAWIDEQ</sequence>
<proteinExistence type="inferred from homology"/>
<evidence type="ECO:0000250" key="1">
    <source>
        <dbReference type="UniProtKB" id="P00410"/>
    </source>
</evidence>
<evidence type="ECO:0000255" key="2"/>
<evidence type="ECO:0000305" key="3"/>
<accession>P43375</accession>
<gene>
    <name type="primary">COX2</name>
</gene>
<protein>
    <recommendedName>
        <fullName>Cytochrome c oxidase subunit 2</fullName>
        <ecNumber>7.1.1.9</ecNumber>
    </recommendedName>
    <alternativeName>
        <fullName>Cytochrome c oxidase polypeptide II</fullName>
    </alternativeName>
</protein>
<name>COX2_EENNA</name>
<reference key="1">
    <citation type="journal article" date="1993" name="J. Mol. Evol.">
        <title>Larger rearranged mitochondrial genomes in Dekkera/Brettanomyces yeasts are more closely related than smaller genomes with a conserved gene order.</title>
        <authorList>
            <person name="Hoeben P."/>
            <person name="Weiller G."/>
            <person name="Clark-Walker G.D."/>
        </authorList>
    </citation>
    <scope>NUCLEOTIDE SEQUENCE [GENOMIC DNA]</scope>
    <source>
        <strain>CBS 1957</strain>
    </source>
</reference>
<comment type="function">
    <text evidence="1">Component of the cytochrome c oxidase, the last enzyme in the mitochondrial electron transport chain which drives oxidative phosphorylation. The respiratory chain contains 3 multisubunit complexes succinate dehydrogenase (complex II, CII), ubiquinol-cytochrome c oxidoreductase (cytochrome b-c1 complex, complex III, CIII) and cytochrome c oxidase (complex IV, CIV), that cooperate to transfer electrons derived from NADH and succinate to molecular oxygen, creating an electrochemical gradient over the inner membrane that drives transmembrane transport and the ATP synthase. Cytochrome c oxidase is the component of the respiratory chain that catalyzes the reduction of oxygen to water. Electrons originating from reduced cytochrome c in the intermembrane space (IMS) are transferred via the dinuclear copper A center (CU(A)) of subunit 2 and heme A of subunit 1 to the active site in subunit 1, a binuclear center (BNC) formed by heme A3 and copper B (CU(B)). The BNC reduces molecular oxygen to 2 water molecules using 4 electrons from cytochrome c in the IMS and 4 protons from the mitochondrial matrix.</text>
</comment>
<comment type="catalytic activity">
    <reaction evidence="1">
        <text>4 Fe(II)-[cytochrome c] + O2 + 8 H(+)(in) = 4 Fe(III)-[cytochrome c] + 2 H2O + 4 H(+)(out)</text>
        <dbReference type="Rhea" id="RHEA:11436"/>
        <dbReference type="Rhea" id="RHEA-COMP:10350"/>
        <dbReference type="Rhea" id="RHEA-COMP:14399"/>
        <dbReference type="ChEBI" id="CHEBI:15377"/>
        <dbReference type="ChEBI" id="CHEBI:15378"/>
        <dbReference type="ChEBI" id="CHEBI:15379"/>
        <dbReference type="ChEBI" id="CHEBI:29033"/>
        <dbReference type="ChEBI" id="CHEBI:29034"/>
        <dbReference type="EC" id="7.1.1.9"/>
    </reaction>
    <physiologicalReaction direction="left-to-right" evidence="1">
        <dbReference type="Rhea" id="RHEA:11437"/>
    </physiologicalReaction>
</comment>
<comment type="cofactor">
    <cofactor evidence="1">
        <name>Cu cation</name>
        <dbReference type="ChEBI" id="CHEBI:23378"/>
    </cofactor>
    <text evidence="1">Binds a dinuclear copper A center per subunit.</text>
</comment>
<comment type="subunit">
    <text evidence="1">Component of the cytochrome c oxidase (complex IV, CIV), a multisubunit enzyme composed of a catalytic core of 3 subunits and several supernumerary subunits. The complex exists as a monomer or a dimer and forms supercomplexes (SCs) in the inner mitochondrial membrane with ubiquinol-cytochrome c oxidoreductase (cytochrome b-c1 complex, complex III, CIII).</text>
</comment>
<comment type="subcellular location">
    <subcellularLocation>
        <location evidence="1">Mitochondrion inner membrane</location>
        <topology evidence="1">Multi-pass membrane protein</topology>
    </subcellularLocation>
</comment>
<comment type="similarity">
    <text evidence="3">Belongs to the cytochrome c oxidase subunit 2 family.</text>
</comment>
<dbReference type="EC" id="7.1.1.9"/>
<dbReference type="EMBL" id="X64825">
    <property type="protein sequence ID" value="CAA46037.1"/>
    <property type="molecule type" value="Genomic_DNA"/>
</dbReference>
<dbReference type="PIR" id="S33374">
    <property type="entry name" value="S33374"/>
</dbReference>
<dbReference type="SMR" id="P43375"/>
<dbReference type="GO" id="GO:0005743">
    <property type="term" value="C:mitochondrial inner membrane"/>
    <property type="evidence" value="ECO:0007669"/>
    <property type="project" value="UniProtKB-SubCell"/>
</dbReference>
<dbReference type="GO" id="GO:0005507">
    <property type="term" value="F:copper ion binding"/>
    <property type="evidence" value="ECO:0007669"/>
    <property type="project" value="InterPro"/>
</dbReference>
<dbReference type="GO" id="GO:0004129">
    <property type="term" value="F:cytochrome-c oxidase activity"/>
    <property type="evidence" value="ECO:0007669"/>
    <property type="project" value="UniProtKB-EC"/>
</dbReference>
<dbReference type="GO" id="GO:0042773">
    <property type="term" value="P:ATP synthesis coupled electron transport"/>
    <property type="evidence" value="ECO:0007669"/>
    <property type="project" value="TreeGrafter"/>
</dbReference>
<dbReference type="CDD" id="cd13912">
    <property type="entry name" value="CcO_II_C"/>
    <property type="match status" value="1"/>
</dbReference>
<dbReference type="FunFam" id="1.10.287.90:FF:000004">
    <property type="entry name" value="Cytochrome c oxidase subunit 2"/>
    <property type="match status" value="1"/>
</dbReference>
<dbReference type="FunFam" id="2.60.40.420:FF:000001">
    <property type="entry name" value="Cytochrome c oxidase subunit 2"/>
    <property type="match status" value="1"/>
</dbReference>
<dbReference type="Gene3D" id="1.10.287.90">
    <property type="match status" value="1"/>
</dbReference>
<dbReference type="Gene3D" id="2.60.40.420">
    <property type="entry name" value="Cupredoxins - blue copper proteins"/>
    <property type="match status" value="1"/>
</dbReference>
<dbReference type="InterPro" id="IPR045187">
    <property type="entry name" value="CcO_II"/>
</dbReference>
<dbReference type="InterPro" id="IPR002429">
    <property type="entry name" value="CcO_II-like_C"/>
</dbReference>
<dbReference type="InterPro" id="IPR034210">
    <property type="entry name" value="CcO_II_C"/>
</dbReference>
<dbReference type="InterPro" id="IPR001505">
    <property type="entry name" value="Copper_CuA"/>
</dbReference>
<dbReference type="InterPro" id="IPR008972">
    <property type="entry name" value="Cupredoxin"/>
</dbReference>
<dbReference type="InterPro" id="IPR011759">
    <property type="entry name" value="Cyt_c_oxidase_su2_TM_dom"/>
</dbReference>
<dbReference type="InterPro" id="IPR036257">
    <property type="entry name" value="Cyt_c_oxidase_su2_TM_sf"/>
</dbReference>
<dbReference type="PANTHER" id="PTHR22888:SF9">
    <property type="entry name" value="CYTOCHROME C OXIDASE SUBUNIT 2"/>
    <property type="match status" value="1"/>
</dbReference>
<dbReference type="PANTHER" id="PTHR22888">
    <property type="entry name" value="CYTOCHROME C OXIDASE, SUBUNIT II"/>
    <property type="match status" value="1"/>
</dbReference>
<dbReference type="Pfam" id="PF00116">
    <property type="entry name" value="COX2"/>
    <property type="match status" value="1"/>
</dbReference>
<dbReference type="Pfam" id="PF02790">
    <property type="entry name" value="COX2_TM"/>
    <property type="match status" value="1"/>
</dbReference>
<dbReference type="PRINTS" id="PR01166">
    <property type="entry name" value="CYCOXIDASEII"/>
</dbReference>
<dbReference type="SUPFAM" id="SSF49503">
    <property type="entry name" value="Cupredoxins"/>
    <property type="match status" value="1"/>
</dbReference>
<dbReference type="SUPFAM" id="SSF81464">
    <property type="entry name" value="Cytochrome c oxidase subunit II-like, transmembrane region"/>
    <property type="match status" value="1"/>
</dbReference>
<dbReference type="PROSITE" id="PS00078">
    <property type="entry name" value="COX2"/>
    <property type="match status" value="1"/>
</dbReference>
<dbReference type="PROSITE" id="PS50857">
    <property type="entry name" value="COX2_CUA"/>
    <property type="match status" value="1"/>
</dbReference>
<dbReference type="PROSITE" id="PS50999">
    <property type="entry name" value="COX2_TM"/>
    <property type="match status" value="1"/>
</dbReference>
<organism>
    <name type="scientific">Eeniella nana</name>
    <name type="common">Yeast</name>
    <name type="synonym">Brettanomyces nanus</name>
    <dbReference type="NCBI Taxonomy" id="13502"/>
    <lineage>
        <taxon>Eukaryota</taxon>
        <taxon>Fungi</taxon>
        <taxon>Dikarya</taxon>
        <taxon>Ascomycota</taxon>
        <taxon>Saccharomycotina</taxon>
        <taxon>Pichiomycetes</taxon>
        <taxon>Pichiales</taxon>
        <taxon>Pichiaceae</taxon>
        <taxon>Brettanomyces</taxon>
    </lineage>
</organism>
<keyword id="KW-0186">Copper</keyword>
<keyword id="KW-0249">Electron transport</keyword>
<keyword id="KW-0460">Magnesium</keyword>
<keyword id="KW-0472">Membrane</keyword>
<keyword id="KW-0479">Metal-binding</keyword>
<keyword id="KW-0496">Mitochondrion</keyword>
<keyword id="KW-0999">Mitochondrion inner membrane</keyword>
<keyword id="KW-0679">Respiratory chain</keyword>
<keyword id="KW-1278">Translocase</keyword>
<keyword id="KW-0812">Transmembrane</keyword>
<keyword id="KW-1133">Transmembrane helix</keyword>
<keyword id="KW-0813">Transport</keyword>
<geneLocation type="mitochondrion"/>